<reference key="1">
    <citation type="journal article" date="2002" name="Nature">
        <title>The genome sequence of Schizosaccharomyces pombe.</title>
        <authorList>
            <person name="Wood V."/>
            <person name="Gwilliam R."/>
            <person name="Rajandream M.A."/>
            <person name="Lyne M.H."/>
            <person name="Lyne R."/>
            <person name="Stewart A."/>
            <person name="Sgouros J.G."/>
            <person name="Peat N."/>
            <person name="Hayles J."/>
            <person name="Baker S.G."/>
            <person name="Basham D."/>
            <person name="Bowman S."/>
            <person name="Brooks K."/>
            <person name="Brown D."/>
            <person name="Brown S."/>
            <person name="Chillingworth T."/>
            <person name="Churcher C.M."/>
            <person name="Collins M."/>
            <person name="Connor R."/>
            <person name="Cronin A."/>
            <person name="Davis P."/>
            <person name="Feltwell T."/>
            <person name="Fraser A."/>
            <person name="Gentles S."/>
            <person name="Goble A."/>
            <person name="Hamlin N."/>
            <person name="Harris D.E."/>
            <person name="Hidalgo J."/>
            <person name="Hodgson G."/>
            <person name="Holroyd S."/>
            <person name="Hornsby T."/>
            <person name="Howarth S."/>
            <person name="Huckle E.J."/>
            <person name="Hunt S."/>
            <person name="Jagels K."/>
            <person name="James K.D."/>
            <person name="Jones L."/>
            <person name="Jones M."/>
            <person name="Leather S."/>
            <person name="McDonald S."/>
            <person name="McLean J."/>
            <person name="Mooney P."/>
            <person name="Moule S."/>
            <person name="Mungall K.L."/>
            <person name="Murphy L.D."/>
            <person name="Niblett D."/>
            <person name="Odell C."/>
            <person name="Oliver K."/>
            <person name="O'Neil S."/>
            <person name="Pearson D."/>
            <person name="Quail M.A."/>
            <person name="Rabbinowitsch E."/>
            <person name="Rutherford K.M."/>
            <person name="Rutter S."/>
            <person name="Saunders D."/>
            <person name="Seeger K."/>
            <person name="Sharp S."/>
            <person name="Skelton J."/>
            <person name="Simmonds M.N."/>
            <person name="Squares R."/>
            <person name="Squares S."/>
            <person name="Stevens K."/>
            <person name="Taylor K."/>
            <person name="Taylor R.G."/>
            <person name="Tivey A."/>
            <person name="Walsh S.V."/>
            <person name="Warren T."/>
            <person name="Whitehead S."/>
            <person name="Woodward J.R."/>
            <person name="Volckaert G."/>
            <person name="Aert R."/>
            <person name="Robben J."/>
            <person name="Grymonprez B."/>
            <person name="Weltjens I."/>
            <person name="Vanstreels E."/>
            <person name="Rieger M."/>
            <person name="Schaefer M."/>
            <person name="Mueller-Auer S."/>
            <person name="Gabel C."/>
            <person name="Fuchs M."/>
            <person name="Duesterhoeft A."/>
            <person name="Fritzc C."/>
            <person name="Holzer E."/>
            <person name="Moestl D."/>
            <person name="Hilbert H."/>
            <person name="Borzym K."/>
            <person name="Langer I."/>
            <person name="Beck A."/>
            <person name="Lehrach H."/>
            <person name="Reinhardt R."/>
            <person name="Pohl T.M."/>
            <person name="Eger P."/>
            <person name="Zimmermann W."/>
            <person name="Wedler H."/>
            <person name="Wambutt R."/>
            <person name="Purnelle B."/>
            <person name="Goffeau A."/>
            <person name="Cadieu E."/>
            <person name="Dreano S."/>
            <person name="Gloux S."/>
            <person name="Lelaure V."/>
            <person name="Mottier S."/>
            <person name="Galibert F."/>
            <person name="Aves S.J."/>
            <person name="Xiang Z."/>
            <person name="Hunt C."/>
            <person name="Moore K."/>
            <person name="Hurst S.M."/>
            <person name="Lucas M."/>
            <person name="Rochet M."/>
            <person name="Gaillardin C."/>
            <person name="Tallada V.A."/>
            <person name="Garzon A."/>
            <person name="Thode G."/>
            <person name="Daga R.R."/>
            <person name="Cruzado L."/>
            <person name="Jimenez J."/>
            <person name="Sanchez M."/>
            <person name="del Rey F."/>
            <person name="Benito J."/>
            <person name="Dominguez A."/>
            <person name="Revuelta J.L."/>
            <person name="Moreno S."/>
            <person name="Armstrong J."/>
            <person name="Forsburg S.L."/>
            <person name="Cerutti L."/>
            <person name="Lowe T."/>
            <person name="McCombie W.R."/>
            <person name="Paulsen I."/>
            <person name="Potashkin J."/>
            <person name="Shpakovski G.V."/>
            <person name="Ussery D."/>
            <person name="Barrell B.G."/>
            <person name="Nurse P."/>
        </authorList>
    </citation>
    <scope>NUCLEOTIDE SEQUENCE [LARGE SCALE GENOMIC DNA]</scope>
    <source>
        <strain>972 / ATCC 24843</strain>
    </source>
</reference>
<reference key="2">
    <citation type="journal article" date="2006" name="Nat. Biotechnol.">
        <title>ORFeome cloning and global analysis of protein localization in the fission yeast Schizosaccharomyces pombe.</title>
        <authorList>
            <person name="Matsuyama A."/>
            <person name="Arai R."/>
            <person name="Yashiroda Y."/>
            <person name="Shirai A."/>
            <person name="Kamata A."/>
            <person name="Sekido S."/>
            <person name="Kobayashi Y."/>
            <person name="Hashimoto A."/>
            <person name="Hamamoto M."/>
            <person name="Hiraoka Y."/>
            <person name="Horinouchi S."/>
            <person name="Yoshida M."/>
        </authorList>
    </citation>
    <scope>SUBCELLULAR LOCATION [LARGE SCALE ANALYSIS]</scope>
</reference>
<reference key="3">
    <citation type="journal article" date="2008" name="J. Proteome Res.">
        <title>Phosphoproteome analysis of fission yeast.</title>
        <authorList>
            <person name="Wilson-Grady J.T."/>
            <person name="Villen J."/>
            <person name="Gygi S.P."/>
        </authorList>
    </citation>
    <scope>PHOSPHORYLATION [LARGE SCALE ANALYSIS] AT SER-123; SER-125; SER-131; THR-132; THR-258; SER-310 AND SER-436</scope>
    <scope>IDENTIFICATION BY MASS SPECTROMETRY</scope>
</reference>
<proteinExistence type="evidence at protein level"/>
<evidence type="ECO:0000256" key="1">
    <source>
        <dbReference type="SAM" id="MobiDB-lite"/>
    </source>
</evidence>
<evidence type="ECO:0000269" key="2">
    <source>
    </source>
</evidence>
<evidence type="ECO:0000269" key="3">
    <source>
    </source>
</evidence>
<organism>
    <name type="scientific">Schizosaccharomyces pombe (strain 972 / ATCC 24843)</name>
    <name type="common">Fission yeast</name>
    <dbReference type="NCBI Taxonomy" id="284812"/>
    <lineage>
        <taxon>Eukaryota</taxon>
        <taxon>Fungi</taxon>
        <taxon>Dikarya</taxon>
        <taxon>Ascomycota</taxon>
        <taxon>Taphrinomycotina</taxon>
        <taxon>Schizosaccharomycetes</taxon>
        <taxon>Schizosaccharomycetales</taxon>
        <taxon>Schizosaccharomycetaceae</taxon>
        <taxon>Schizosaccharomyces</taxon>
    </lineage>
</organism>
<accession>O74417</accession>
<keyword id="KW-0963">Cytoplasm</keyword>
<keyword id="KW-0539">Nucleus</keyword>
<keyword id="KW-0597">Phosphoprotein</keyword>
<keyword id="KW-1185">Reference proteome</keyword>
<comment type="subcellular location">
    <subcellularLocation>
        <location evidence="2">Cytoplasm</location>
    </subcellularLocation>
    <subcellularLocation>
        <location evidence="2">Nucleus</location>
    </subcellularLocation>
</comment>
<dbReference type="EMBL" id="CU329672">
    <property type="protein sequence ID" value="CAA20657.1"/>
    <property type="molecule type" value="Genomic_DNA"/>
</dbReference>
<dbReference type="PIR" id="T41015">
    <property type="entry name" value="T41015"/>
</dbReference>
<dbReference type="SMR" id="O74417"/>
<dbReference type="BioGRID" id="275786">
    <property type="interactions" value="11"/>
</dbReference>
<dbReference type="STRING" id="284812.O74417"/>
<dbReference type="iPTMnet" id="O74417"/>
<dbReference type="PaxDb" id="4896-SPCC14G10.04.1"/>
<dbReference type="EnsemblFungi" id="SPCC14G10.04.1">
    <property type="protein sequence ID" value="SPCC14G10.04.1:pep"/>
    <property type="gene ID" value="SPCC14G10.04"/>
</dbReference>
<dbReference type="KEGG" id="spo:2539216"/>
<dbReference type="PomBase" id="SPCC14G10.04"/>
<dbReference type="VEuPathDB" id="FungiDB:SPCC14G10.04"/>
<dbReference type="HOGENOM" id="CLU_548785_0_0_1"/>
<dbReference type="InParanoid" id="O74417"/>
<dbReference type="OMA" id="EAWKRMM"/>
<dbReference type="PRO" id="PR:O74417"/>
<dbReference type="Proteomes" id="UP000002485">
    <property type="component" value="Chromosome III"/>
</dbReference>
<dbReference type="GO" id="GO:0005737">
    <property type="term" value="C:cytoplasm"/>
    <property type="evidence" value="ECO:0007005"/>
    <property type="project" value="PomBase"/>
</dbReference>
<dbReference type="GO" id="GO:0005829">
    <property type="term" value="C:cytosol"/>
    <property type="evidence" value="ECO:0007005"/>
    <property type="project" value="PomBase"/>
</dbReference>
<dbReference type="GO" id="GO:0005634">
    <property type="term" value="C:nucleus"/>
    <property type="evidence" value="ECO:0007005"/>
    <property type="project" value="PomBase"/>
</dbReference>
<dbReference type="GO" id="GO:0008190">
    <property type="term" value="F:eukaryotic initiation factor 4E binding"/>
    <property type="evidence" value="ECO:0000266"/>
    <property type="project" value="PomBase"/>
</dbReference>
<dbReference type="GO" id="GO:0006402">
    <property type="term" value="P:mRNA catabolic process"/>
    <property type="evidence" value="ECO:0000266"/>
    <property type="project" value="PomBase"/>
</dbReference>
<dbReference type="GO" id="GO:2000766">
    <property type="term" value="P:negative regulation of cytoplasmic translation"/>
    <property type="evidence" value="ECO:0000266"/>
    <property type="project" value="PomBase"/>
</dbReference>
<dbReference type="InterPro" id="IPR046784">
    <property type="entry name" value="Eap1"/>
</dbReference>
<dbReference type="Pfam" id="PF20566">
    <property type="entry name" value="Eap1"/>
    <property type="match status" value="2"/>
</dbReference>
<gene>
    <name type="ORF">SPCC14G10.04</name>
</gene>
<protein>
    <recommendedName>
        <fullName>Uncharacterized protein C14G10.04</fullName>
    </recommendedName>
</protein>
<feature type="chain" id="PRO_0000304026" description="Uncharacterized protein C14G10.04">
    <location>
        <begin position="1"/>
        <end position="497"/>
    </location>
</feature>
<feature type="region of interest" description="Disordered" evidence="1">
    <location>
        <begin position="44"/>
        <end position="95"/>
    </location>
</feature>
<feature type="region of interest" description="Disordered" evidence="1">
    <location>
        <begin position="120"/>
        <end position="151"/>
    </location>
</feature>
<feature type="region of interest" description="Disordered" evidence="1">
    <location>
        <begin position="195"/>
        <end position="227"/>
    </location>
</feature>
<feature type="region of interest" description="Disordered" evidence="1">
    <location>
        <begin position="367"/>
        <end position="497"/>
    </location>
</feature>
<feature type="compositionally biased region" description="Basic and acidic residues" evidence="1">
    <location>
        <begin position="44"/>
        <end position="74"/>
    </location>
</feature>
<feature type="compositionally biased region" description="Low complexity" evidence="1">
    <location>
        <begin position="120"/>
        <end position="131"/>
    </location>
</feature>
<feature type="compositionally biased region" description="Low complexity" evidence="1">
    <location>
        <begin position="213"/>
        <end position="227"/>
    </location>
</feature>
<feature type="compositionally biased region" description="Polar residues" evidence="1">
    <location>
        <begin position="367"/>
        <end position="385"/>
    </location>
</feature>
<feature type="compositionally biased region" description="Low complexity" evidence="1">
    <location>
        <begin position="400"/>
        <end position="409"/>
    </location>
</feature>
<feature type="compositionally biased region" description="Low complexity" evidence="1">
    <location>
        <begin position="448"/>
        <end position="472"/>
    </location>
</feature>
<feature type="modified residue" description="Phosphoserine" evidence="3">
    <location>
        <position position="123"/>
    </location>
</feature>
<feature type="modified residue" description="Phosphoserine" evidence="3">
    <location>
        <position position="125"/>
    </location>
</feature>
<feature type="modified residue" description="Phosphoserine" evidence="3">
    <location>
        <position position="131"/>
    </location>
</feature>
<feature type="modified residue" description="Phosphothreonine" evidence="3">
    <location>
        <position position="132"/>
    </location>
</feature>
<feature type="modified residue" description="Phosphothreonine" evidence="3">
    <location>
        <position position="258"/>
    </location>
</feature>
<feature type="modified residue" description="Phosphoserine" evidence="3">
    <location>
        <position position="310"/>
    </location>
</feature>
<feature type="modified residue" description="Phosphoserine" evidence="3">
    <location>
        <position position="436"/>
    </location>
</feature>
<sequence length="497" mass="52625">MSQVIQYSEADLLYLSKSPLIKKPENLPEWILPEAMKADRERHIRQEKEMKRHDDDGRQYQSDRKFAKSKHDDIILGPPKLSFASSNENGRSVGRHDDLLSLGNVYNGVASLRYRNGASVSRSSSIGHSGSTAPWSSVGRHNRKKDNEHRDEMEGLEKVMKQRAGNTGPLVANSTEEFEAWKRMMKASSGEAGAGNVITPGVTSTTGAPSGKASLSRAASNSSTSARAGISVDSLFGKRSAAQAMATVVPSVSTPGGTPPRFASPALTVESMVHAAPSTTTSSRFSKFFNGLAGPETSKTSTPNMSNNPSPRVANTVVSPAPIPTIGSATIDKDAEGFQRVLAMLGRQASSTTGSPKVALSQMPQVNVNPSNQDLASVKQPSGFSPPSAVAPPPGLGNHNFSNDDSSFFRSLMTSDTRSVPPPPGFSTNAPKAVKSPEISAPPGLYRGLSSGASIPSAPPGFGYQQPSFPYSPGFPPSAYNQNRTGYGFPDTSRPPH</sequence>
<name>YJL4_SCHPO</name>